<dbReference type="EC" id="4.2.1.20" evidence="1"/>
<dbReference type="EMBL" id="CP000058">
    <property type="protein sequence ID" value="AAZ33480.1"/>
    <property type="molecule type" value="Genomic_DNA"/>
</dbReference>
<dbReference type="RefSeq" id="WP_004660359.1">
    <property type="nucleotide sequence ID" value="NC_005773.3"/>
</dbReference>
<dbReference type="SMR" id="Q48QG7"/>
<dbReference type="GeneID" id="61872737"/>
<dbReference type="KEGG" id="psp:PSPPH_0035"/>
<dbReference type="eggNOG" id="COG0159">
    <property type="taxonomic scope" value="Bacteria"/>
</dbReference>
<dbReference type="HOGENOM" id="CLU_016734_0_4_6"/>
<dbReference type="UniPathway" id="UPA00035">
    <property type="reaction ID" value="UER00044"/>
</dbReference>
<dbReference type="Proteomes" id="UP000000551">
    <property type="component" value="Chromosome"/>
</dbReference>
<dbReference type="GO" id="GO:0005829">
    <property type="term" value="C:cytosol"/>
    <property type="evidence" value="ECO:0007669"/>
    <property type="project" value="TreeGrafter"/>
</dbReference>
<dbReference type="GO" id="GO:0004834">
    <property type="term" value="F:tryptophan synthase activity"/>
    <property type="evidence" value="ECO:0007669"/>
    <property type="project" value="UniProtKB-UniRule"/>
</dbReference>
<dbReference type="CDD" id="cd04724">
    <property type="entry name" value="Tryptophan_synthase_alpha"/>
    <property type="match status" value="1"/>
</dbReference>
<dbReference type="FunFam" id="3.20.20.70:FF:000037">
    <property type="entry name" value="Tryptophan synthase alpha chain"/>
    <property type="match status" value="1"/>
</dbReference>
<dbReference type="Gene3D" id="3.20.20.70">
    <property type="entry name" value="Aldolase class I"/>
    <property type="match status" value="1"/>
</dbReference>
<dbReference type="HAMAP" id="MF_00131">
    <property type="entry name" value="Trp_synth_alpha"/>
    <property type="match status" value="1"/>
</dbReference>
<dbReference type="InterPro" id="IPR013785">
    <property type="entry name" value="Aldolase_TIM"/>
</dbReference>
<dbReference type="InterPro" id="IPR011060">
    <property type="entry name" value="RibuloseP-bd_barrel"/>
</dbReference>
<dbReference type="InterPro" id="IPR018204">
    <property type="entry name" value="Trp_synthase_alpha_AS"/>
</dbReference>
<dbReference type="InterPro" id="IPR002028">
    <property type="entry name" value="Trp_synthase_suA"/>
</dbReference>
<dbReference type="NCBIfam" id="TIGR00262">
    <property type="entry name" value="trpA"/>
    <property type="match status" value="1"/>
</dbReference>
<dbReference type="PANTHER" id="PTHR43406:SF1">
    <property type="entry name" value="TRYPTOPHAN SYNTHASE ALPHA CHAIN, CHLOROPLASTIC"/>
    <property type="match status" value="1"/>
</dbReference>
<dbReference type="PANTHER" id="PTHR43406">
    <property type="entry name" value="TRYPTOPHAN SYNTHASE, ALPHA CHAIN"/>
    <property type="match status" value="1"/>
</dbReference>
<dbReference type="Pfam" id="PF00290">
    <property type="entry name" value="Trp_syntA"/>
    <property type="match status" value="1"/>
</dbReference>
<dbReference type="SUPFAM" id="SSF51366">
    <property type="entry name" value="Ribulose-phoshate binding barrel"/>
    <property type="match status" value="1"/>
</dbReference>
<dbReference type="PROSITE" id="PS00167">
    <property type="entry name" value="TRP_SYNTHASE_ALPHA"/>
    <property type="match status" value="1"/>
</dbReference>
<name>TRPA_PSE14</name>
<sequence>MSRLEQRFAQLKTEGRAALVTFITAGDPGYDTSLQVLKGLPAAGADVIELGMPFTDPMADGVAIQLATLRALDAGQTLQKTLQMVSEFRVDDQTTPIVLMGYYNPIHRFGVEAFVAQAKEAGVDGLIIVDLPPEHDAELATPAQASGIDFIRLTTPTTDDARLPRVLERSSGFVYYVSVAGVTGAGSATTEHVTEAIARLRRHTSLPISVGFGIRTPEQAAAIARLADGVVVGSAFVDKIATAESPEKAIDGVLTLCAALAEGVRNARIG</sequence>
<keyword id="KW-0028">Amino-acid biosynthesis</keyword>
<keyword id="KW-0057">Aromatic amino acid biosynthesis</keyword>
<keyword id="KW-0456">Lyase</keyword>
<keyword id="KW-0822">Tryptophan biosynthesis</keyword>
<accession>Q48QG7</accession>
<comment type="function">
    <text evidence="1">The alpha subunit is responsible for the aldol cleavage of indoleglycerol phosphate to indole and glyceraldehyde 3-phosphate.</text>
</comment>
<comment type="catalytic activity">
    <reaction evidence="1">
        <text>(1S,2R)-1-C-(indol-3-yl)glycerol 3-phosphate + L-serine = D-glyceraldehyde 3-phosphate + L-tryptophan + H2O</text>
        <dbReference type="Rhea" id="RHEA:10532"/>
        <dbReference type="ChEBI" id="CHEBI:15377"/>
        <dbReference type="ChEBI" id="CHEBI:33384"/>
        <dbReference type="ChEBI" id="CHEBI:57912"/>
        <dbReference type="ChEBI" id="CHEBI:58866"/>
        <dbReference type="ChEBI" id="CHEBI:59776"/>
        <dbReference type="EC" id="4.2.1.20"/>
    </reaction>
</comment>
<comment type="pathway">
    <text evidence="1">Amino-acid biosynthesis; L-tryptophan biosynthesis; L-tryptophan from chorismate: step 5/5.</text>
</comment>
<comment type="subunit">
    <text evidence="1">Tetramer of two alpha and two beta chains.</text>
</comment>
<comment type="similarity">
    <text evidence="1">Belongs to the TrpA family.</text>
</comment>
<evidence type="ECO:0000255" key="1">
    <source>
        <dbReference type="HAMAP-Rule" id="MF_00131"/>
    </source>
</evidence>
<protein>
    <recommendedName>
        <fullName evidence="1">Tryptophan synthase alpha chain</fullName>
        <ecNumber evidence="1">4.2.1.20</ecNumber>
    </recommendedName>
</protein>
<organism>
    <name type="scientific">Pseudomonas savastanoi pv. phaseolicola (strain 1448A / Race 6)</name>
    <name type="common">Pseudomonas syringae pv. phaseolicola (strain 1448A / Race 6)</name>
    <dbReference type="NCBI Taxonomy" id="264730"/>
    <lineage>
        <taxon>Bacteria</taxon>
        <taxon>Pseudomonadati</taxon>
        <taxon>Pseudomonadota</taxon>
        <taxon>Gammaproteobacteria</taxon>
        <taxon>Pseudomonadales</taxon>
        <taxon>Pseudomonadaceae</taxon>
        <taxon>Pseudomonas</taxon>
    </lineage>
</organism>
<reference key="1">
    <citation type="journal article" date="2005" name="J. Bacteriol.">
        <title>Whole-genome sequence analysis of Pseudomonas syringae pv. phaseolicola 1448A reveals divergence among pathovars in genes involved in virulence and transposition.</title>
        <authorList>
            <person name="Joardar V."/>
            <person name="Lindeberg M."/>
            <person name="Jackson R.W."/>
            <person name="Selengut J."/>
            <person name="Dodson R."/>
            <person name="Brinkac L.M."/>
            <person name="Daugherty S.C."/>
            <person name="DeBoy R.T."/>
            <person name="Durkin A.S."/>
            <person name="Gwinn Giglio M."/>
            <person name="Madupu R."/>
            <person name="Nelson W.C."/>
            <person name="Rosovitz M.J."/>
            <person name="Sullivan S.A."/>
            <person name="Crabtree J."/>
            <person name="Creasy T."/>
            <person name="Davidsen T.M."/>
            <person name="Haft D.H."/>
            <person name="Zafar N."/>
            <person name="Zhou L."/>
            <person name="Halpin R."/>
            <person name="Holley T."/>
            <person name="Khouri H.M."/>
            <person name="Feldblyum T.V."/>
            <person name="White O."/>
            <person name="Fraser C.M."/>
            <person name="Chatterjee A.K."/>
            <person name="Cartinhour S."/>
            <person name="Schneider D."/>
            <person name="Mansfield J.W."/>
            <person name="Collmer A."/>
            <person name="Buell R."/>
        </authorList>
    </citation>
    <scope>NUCLEOTIDE SEQUENCE [LARGE SCALE GENOMIC DNA]</scope>
    <source>
        <strain>1448A / Race 6</strain>
    </source>
</reference>
<feature type="chain" id="PRO_1000018251" description="Tryptophan synthase alpha chain">
    <location>
        <begin position="1"/>
        <end position="270"/>
    </location>
</feature>
<feature type="active site" description="Proton acceptor" evidence="1">
    <location>
        <position position="49"/>
    </location>
</feature>
<feature type="active site" description="Proton acceptor" evidence="1">
    <location>
        <position position="60"/>
    </location>
</feature>
<gene>
    <name evidence="1" type="primary">trpA</name>
    <name type="ordered locus">PSPPH_0035</name>
</gene>
<proteinExistence type="inferred from homology"/>